<proteinExistence type="inferred from homology"/>
<protein>
    <recommendedName>
        <fullName>UPF0313 protein MA_4618</fullName>
    </recommendedName>
</protein>
<comment type="cofactor">
    <cofactor evidence="4">
        <name>[4Fe-4S] cluster</name>
        <dbReference type="ChEBI" id="CHEBI:49883"/>
    </cofactor>
    <text evidence="4">Binds 1 [4Fe-4S] cluster. The cluster is coordinated with 3 cysteines and an exchangeable S-adenosyl-L-methionine.</text>
</comment>
<comment type="similarity">
    <text evidence="4">In the C-terminal section; belongs to the UPF0313 family.</text>
</comment>
<accession>Q8THA2</accession>
<gene>
    <name type="ordered locus">MA_4618</name>
</gene>
<dbReference type="EMBL" id="AE010299">
    <property type="protein sequence ID" value="AAM07954.1"/>
    <property type="molecule type" value="Genomic_DNA"/>
</dbReference>
<dbReference type="STRING" id="188937.MA_4618"/>
<dbReference type="EnsemblBacteria" id="AAM07954">
    <property type="protein sequence ID" value="AAM07954"/>
    <property type="gene ID" value="MA_4618"/>
</dbReference>
<dbReference type="KEGG" id="mac:MA_4618"/>
<dbReference type="HOGENOM" id="CLU_018288_2_0_2"/>
<dbReference type="InParanoid" id="Q8THA2"/>
<dbReference type="PhylomeDB" id="Q8THA2"/>
<dbReference type="Proteomes" id="UP000002487">
    <property type="component" value="Chromosome"/>
</dbReference>
<dbReference type="GO" id="GO:0051539">
    <property type="term" value="F:4 iron, 4 sulfur cluster binding"/>
    <property type="evidence" value="ECO:0007669"/>
    <property type="project" value="UniProtKB-KW"/>
</dbReference>
<dbReference type="GO" id="GO:0003824">
    <property type="term" value="F:catalytic activity"/>
    <property type="evidence" value="ECO:0007669"/>
    <property type="project" value="InterPro"/>
</dbReference>
<dbReference type="GO" id="GO:0005506">
    <property type="term" value="F:iron ion binding"/>
    <property type="evidence" value="ECO:0007669"/>
    <property type="project" value="UniProtKB-UniRule"/>
</dbReference>
<dbReference type="Gene3D" id="3.80.30.20">
    <property type="entry name" value="tm_1862 like domain"/>
    <property type="match status" value="1"/>
</dbReference>
<dbReference type="HAMAP" id="MF_01251">
    <property type="entry name" value="UPF0313"/>
    <property type="match status" value="1"/>
</dbReference>
<dbReference type="InterPro" id="IPR006638">
    <property type="entry name" value="Elp3/MiaA/NifB-like_rSAM"/>
</dbReference>
<dbReference type="InterPro" id="IPR020612">
    <property type="entry name" value="Methylthiotransferase_CS"/>
</dbReference>
<dbReference type="InterPro" id="IPR007197">
    <property type="entry name" value="rSAM"/>
</dbReference>
<dbReference type="InterPro" id="IPR023404">
    <property type="entry name" value="rSAM_horseshoe"/>
</dbReference>
<dbReference type="InterPro" id="IPR022946">
    <property type="entry name" value="UPF0313"/>
</dbReference>
<dbReference type="InterPro" id="IPR024560">
    <property type="entry name" value="UPF0313_C"/>
</dbReference>
<dbReference type="InterPro" id="IPR013704">
    <property type="entry name" value="UPF0313_N"/>
</dbReference>
<dbReference type="NCBIfam" id="TIGR03904">
    <property type="entry name" value="SAM_YgiQ"/>
    <property type="match status" value="1"/>
</dbReference>
<dbReference type="PANTHER" id="PTHR32331">
    <property type="entry name" value="UPF0313 PROTEIN YGIQ"/>
    <property type="match status" value="1"/>
</dbReference>
<dbReference type="PANTHER" id="PTHR32331:SF0">
    <property type="entry name" value="UPF0313 PROTEIN YGIQ"/>
    <property type="match status" value="1"/>
</dbReference>
<dbReference type="Pfam" id="PF11842">
    <property type="entry name" value="DUF3362"/>
    <property type="match status" value="1"/>
</dbReference>
<dbReference type="Pfam" id="PF04055">
    <property type="entry name" value="Radical_SAM"/>
    <property type="match status" value="1"/>
</dbReference>
<dbReference type="Pfam" id="PF08497">
    <property type="entry name" value="Radical_SAM_N"/>
    <property type="match status" value="1"/>
</dbReference>
<dbReference type="SFLD" id="SFLDG01082">
    <property type="entry name" value="B12-binding_domain_containing"/>
    <property type="match status" value="1"/>
</dbReference>
<dbReference type="SFLD" id="SFLDS00029">
    <property type="entry name" value="Radical_SAM"/>
    <property type="match status" value="1"/>
</dbReference>
<dbReference type="SFLD" id="SFLDG01069">
    <property type="entry name" value="UPF0313"/>
    <property type="match status" value="1"/>
</dbReference>
<dbReference type="SMART" id="SM00729">
    <property type="entry name" value="Elp3"/>
    <property type="match status" value="1"/>
</dbReference>
<dbReference type="SUPFAM" id="SSF102114">
    <property type="entry name" value="Radical SAM enzymes"/>
    <property type="match status" value="1"/>
</dbReference>
<dbReference type="PROSITE" id="PS51918">
    <property type="entry name" value="RADICAL_SAM"/>
    <property type="match status" value="1"/>
</dbReference>
<evidence type="ECO:0000255" key="1"/>
<evidence type="ECO:0000255" key="2">
    <source>
        <dbReference type="PROSITE-ProRule" id="PRU01266"/>
    </source>
</evidence>
<evidence type="ECO:0000256" key="3">
    <source>
        <dbReference type="SAM" id="MobiDB-lite"/>
    </source>
</evidence>
<evidence type="ECO:0000305" key="4"/>
<name>Y4618_METAC</name>
<sequence length="742" mass="83276">MGVRKQTMVKDTAVPIENKKFTREKKDKEKDKKPDRERAGRKTGFFVPKKVETGKKGKLGRKSEGKAEEKAEGKAGISTSTISERAVLKPSAGKRKKAESGPGTKTGKKEKKQKKSFSSSLPASKFLPMSPEEVKARGWKELDIILVTGDAYVDHSSFGTAIIGRVLEDAGFRVGIIAQPRWDNPEDLKKLGRPRLFFSVSAGNTDSMVSNLTPGLKPRKKDAYSPGNKTGLRPNRSVIIYSNRIKEAFPNVPIVLGGIEASLRRFAHYDYLSDKVRQAILADAPADLVVYGMGELQIVEIAKRLQAGEDIRKIRDIPGTVWKMEVRAWKELKEKGKGTNEAVARDTAPEAAEFFKEYIEIPSFSEVSQDKAAFAKAFRTYFLEQNPITGKGIVQPHPKTVIVQNRPMRPLTEAELDHVYELPYTGEAHPSYTEPIPALEMVKFSLTTHRGCFGGCSFCAITQHQGRMITSRSIESVLREAKKLTEKPDFKGIINGVGGPTANMYGMGCRSWEKQGACLDKACLYPRVCPALDTSHKKLLELMKRLRELPGVKHVFTGYGVRYDLALEDEEYLEELCTHHISGQLRIAPEHFSKRVTDAMSKPGKKVYERFSEKFAAFNKKCGKEQYIVNYLMSGHPGCTLKDMIEMAEYLRDHGGYTEQVQDFTPTPMTVSTCMYYTGLDPFTGKKVYVAKDKKEKAMQRALMHYRSPANYELVYEALEKAGRLDLVGNAHKCLIRRKEKQ</sequence>
<reference key="1">
    <citation type="journal article" date="2002" name="Genome Res.">
        <title>The genome of Methanosarcina acetivorans reveals extensive metabolic and physiological diversity.</title>
        <authorList>
            <person name="Galagan J.E."/>
            <person name="Nusbaum C."/>
            <person name="Roy A."/>
            <person name="Endrizzi M.G."/>
            <person name="Macdonald P."/>
            <person name="FitzHugh W."/>
            <person name="Calvo S."/>
            <person name="Engels R."/>
            <person name="Smirnov S."/>
            <person name="Atnoor D."/>
            <person name="Brown A."/>
            <person name="Allen N."/>
            <person name="Naylor J."/>
            <person name="Stange-Thomann N."/>
            <person name="DeArellano K."/>
            <person name="Johnson R."/>
            <person name="Linton L."/>
            <person name="McEwan P."/>
            <person name="McKernan K."/>
            <person name="Talamas J."/>
            <person name="Tirrell A."/>
            <person name="Ye W."/>
            <person name="Zimmer A."/>
            <person name="Barber R.D."/>
            <person name="Cann I."/>
            <person name="Graham D.E."/>
            <person name="Grahame D.A."/>
            <person name="Guss A.M."/>
            <person name="Hedderich R."/>
            <person name="Ingram-Smith C."/>
            <person name="Kuettner H.C."/>
            <person name="Krzycki J.A."/>
            <person name="Leigh J.A."/>
            <person name="Li W."/>
            <person name="Liu J."/>
            <person name="Mukhopadhyay B."/>
            <person name="Reeve J.N."/>
            <person name="Smith K."/>
            <person name="Springer T.A."/>
            <person name="Umayam L.A."/>
            <person name="White O."/>
            <person name="White R.H."/>
            <person name="de Macario E.C."/>
            <person name="Ferry J.G."/>
            <person name="Jarrell K.F."/>
            <person name="Jing H."/>
            <person name="Macario A.J.L."/>
            <person name="Paulsen I.T."/>
            <person name="Pritchett M."/>
            <person name="Sowers K.R."/>
            <person name="Swanson R.V."/>
            <person name="Zinder S.H."/>
            <person name="Lander E."/>
            <person name="Metcalf W.W."/>
            <person name="Birren B."/>
        </authorList>
    </citation>
    <scope>NUCLEOTIDE SEQUENCE [LARGE SCALE GENOMIC DNA]</scope>
    <source>
        <strain>ATCC 35395 / DSM 2834 / JCM 12185 / C2A</strain>
    </source>
</reference>
<keyword id="KW-0004">4Fe-4S</keyword>
<keyword id="KW-0408">Iron</keyword>
<keyword id="KW-0411">Iron-sulfur</keyword>
<keyword id="KW-0479">Metal-binding</keyword>
<keyword id="KW-1185">Reference proteome</keyword>
<keyword id="KW-0949">S-adenosyl-L-methionine</keyword>
<organism>
    <name type="scientific">Methanosarcina acetivorans (strain ATCC 35395 / DSM 2834 / JCM 12185 / C2A)</name>
    <dbReference type="NCBI Taxonomy" id="188937"/>
    <lineage>
        <taxon>Archaea</taxon>
        <taxon>Methanobacteriati</taxon>
        <taxon>Methanobacteriota</taxon>
        <taxon>Stenosarchaea group</taxon>
        <taxon>Methanomicrobia</taxon>
        <taxon>Methanosarcinales</taxon>
        <taxon>Methanosarcinaceae</taxon>
        <taxon>Methanosarcina</taxon>
    </lineage>
</organism>
<feature type="chain" id="PRO_0000076403" description="UPF0313 protein MA_4618">
    <location>
        <begin position="1"/>
        <end position="742"/>
    </location>
</feature>
<feature type="domain" description="Radical SAM core" evidence="2">
    <location>
        <begin position="438"/>
        <end position="707"/>
    </location>
</feature>
<feature type="region of interest" description="Unknown">
    <location>
        <begin position="1"/>
        <end position="128"/>
    </location>
</feature>
<feature type="region of interest" description="Disordered" evidence="3">
    <location>
        <begin position="1"/>
        <end position="125"/>
    </location>
</feature>
<feature type="region of interest" description="UPF0313">
    <location>
        <begin position="129"/>
        <end position="742"/>
    </location>
</feature>
<feature type="compositionally biased region" description="Basic and acidic residues" evidence="3">
    <location>
        <begin position="17"/>
        <end position="40"/>
    </location>
</feature>
<feature type="compositionally biased region" description="Basic and acidic residues" evidence="3">
    <location>
        <begin position="49"/>
        <end position="73"/>
    </location>
</feature>
<feature type="compositionally biased region" description="Basic residues" evidence="3">
    <location>
        <begin position="106"/>
        <end position="115"/>
    </location>
</feature>
<feature type="binding site" evidence="1">
    <location>
        <position position="452"/>
    </location>
    <ligand>
        <name>[4Fe-4S] cluster</name>
        <dbReference type="ChEBI" id="CHEBI:49883"/>
        <note>4Fe-4S-S-AdoMet</note>
    </ligand>
</feature>
<feature type="binding site" evidence="1">
    <location>
        <position position="456"/>
    </location>
    <ligand>
        <name>[4Fe-4S] cluster</name>
        <dbReference type="ChEBI" id="CHEBI:49883"/>
        <note>4Fe-4S-S-AdoMet</note>
    </ligand>
</feature>
<feature type="binding site" evidence="1">
    <location>
        <position position="459"/>
    </location>
    <ligand>
        <name>[4Fe-4S] cluster</name>
        <dbReference type="ChEBI" id="CHEBI:49883"/>
        <note>4Fe-4S-S-AdoMet</note>
    </ligand>
</feature>